<reference key="1">
    <citation type="journal article" date="2011" name="Nat. Commun.">
        <title>Effector diversification within compartments of the Leptosphaeria maculans genome affected by Repeat-Induced Point mutations.</title>
        <authorList>
            <person name="Rouxel T."/>
            <person name="Grandaubert J."/>
            <person name="Hane J.K."/>
            <person name="Hoede C."/>
            <person name="van de Wouw A.P."/>
            <person name="Couloux A."/>
            <person name="Dominguez V."/>
            <person name="Anthouard V."/>
            <person name="Bally P."/>
            <person name="Bourras S."/>
            <person name="Cozijnsen A.J."/>
            <person name="Ciuffetti L.M."/>
            <person name="Degrave A."/>
            <person name="Dilmaghani A."/>
            <person name="Duret L."/>
            <person name="Fudal I."/>
            <person name="Goodwin S.B."/>
            <person name="Gout L."/>
            <person name="Glaser N."/>
            <person name="Linglin J."/>
            <person name="Kema G.H.J."/>
            <person name="Lapalu N."/>
            <person name="Lawrence C.B."/>
            <person name="May K."/>
            <person name="Meyer M."/>
            <person name="Ollivier B."/>
            <person name="Poulain J."/>
            <person name="Schoch C.L."/>
            <person name="Simon A."/>
            <person name="Spatafora J.W."/>
            <person name="Stachowiak A."/>
            <person name="Turgeon B.G."/>
            <person name="Tyler B.M."/>
            <person name="Vincent D."/>
            <person name="Weissenbach J."/>
            <person name="Amselem J."/>
            <person name="Quesneville H."/>
            <person name="Oliver R.P."/>
            <person name="Wincker P."/>
            <person name="Balesdent M.-H."/>
            <person name="Howlett B.J."/>
        </authorList>
    </citation>
    <scope>NUCLEOTIDE SEQUENCE [LARGE SCALE GENOMIC DNA]</scope>
    <source>
        <strain>JN3 / isolate v23.1.3 / race Av1-4-5-6-7-8</strain>
    </source>
</reference>
<reference key="2">
    <citation type="journal article" date="2019" name="Fungal Genet. Biol.">
        <title>Identification of a gene cluster for the synthesis of the plant hormone abscisic acid in the plant pathogen Leptosphaeria maculans.</title>
        <authorList>
            <person name="Darma R."/>
            <person name="Lutz A."/>
            <person name="Elliott C.E."/>
            <person name="Idnurm A."/>
        </authorList>
    </citation>
    <scope>IDENTIFICATION</scope>
    <scope>INDUCTION</scope>
    <scope>FUNCTION</scope>
</reference>
<comment type="function">
    <text evidence="2">Transcription factor that regulates the expression of the gene cluster that mediates the biosynthesis of abscisic acid (ABA), a phytohormone that acts antagonistically toward salicylic acid (SA), jasmonic acid (JA) and ethylene (ETH) signaling, to impede plant defense responses.</text>
</comment>
<comment type="subcellular location">
    <subcellularLocation>
        <location evidence="4">Nucleus</location>
    </subcellularLocation>
</comment>
<comment type="induction">
    <text evidence="2">Expression is induced during the early biotrophic stage of development.</text>
</comment>
<gene>
    <name evidence="3" type="primary">abl7</name>
    <name type="ORF">LEMA_P087770.1</name>
</gene>
<dbReference type="EMBL" id="FP929136">
    <property type="protein sequence ID" value="CBX99538.1"/>
    <property type="molecule type" value="Genomic_DNA"/>
</dbReference>
<dbReference type="RefSeq" id="XP_003843017.1">
    <property type="nucleotide sequence ID" value="XM_003842969.1"/>
</dbReference>
<dbReference type="STRING" id="985895.E5A7E3"/>
<dbReference type="EnsemblFungi" id="CBX99538">
    <property type="protein sequence ID" value="CBX99538"/>
    <property type="gene ID" value="LEMA_P087770.1"/>
</dbReference>
<dbReference type="VEuPathDB" id="FungiDB:LEMA_P087770.1"/>
<dbReference type="eggNOG" id="ENOG502RZ01">
    <property type="taxonomic scope" value="Eukaryota"/>
</dbReference>
<dbReference type="HOGENOM" id="CLU_011017_3_1_1"/>
<dbReference type="InParanoid" id="E5A7E3"/>
<dbReference type="OMA" id="ECEKRAM"/>
<dbReference type="OrthoDB" id="3037908at2759"/>
<dbReference type="Proteomes" id="UP000002668">
    <property type="component" value="Genome"/>
</dbReference>
<dbReference type="GO" id="GO:0005634">
    <property type="term" value="C:nucleus"/>
    <property type="evidence" value="ECO:0007669"/>
    <property type="project" value="UniProtKB-SubCell"/>
</dbReference>
<dbReference type="GO" id="GO:0003677">
    <property type="term" value="F:DNA binding"/>
    <property type="evidence" value="ECO:0007669"/>
    <property type="project" value="UniProtKB-KW"/>
</dbReference>
<dbReference type="GO" id="GO:0000981">
    <property type="term" value="F:DNA-binding transcription factor activity, RNA polymerase II-specific"/>
    <property type="evidence" value="ECO:0007669"/>
    <property type="project" value="InterPro"/>
</dbReference>
<dbReference type="GO" id="GO:0008270">
    <property type="term" value="F:zinc ion binding"/>
    <property type="evidence" value="ECO:0007669"/>
    <property type="project" value="InterPro"/>
</dbReference>
<dbReference type="GO" id="GO:0006351">
    <property type="term" value="P:DNA-templated transcription"/>
    <property type="evidence" value="ECO:0007669"/>
    <property type="project" value="InterPro"/>
</dbReference>
<dbReference type="CDD" id="cd12148">
    <property type="entry name" value="fungal_TF_MHR"/>
    <property type="match status" value="1"/>
</dbReference>
<dbReference type="CDD" id="cd00067">
    <property type="entry name" value="GAL4"/>
    <property type="match status" value="1"/>
</dbReference>
<dbReference type="Gene3D" id="4.10.240.10">
    <property type="entry name" value="Zn(2)-C6 fungal-type DNA-binding domain"/>
    <property type="match status" value="1"/>
</dbReference>
<dbReference type="InterPro" id="IPR050815">
    <property type="entry name" value="TF_fung"/>
</dbReference>
<dbReference type="InterPro" id="IPR007219">
    <property type="entry name" value="Transcription_factor_dom_fun"/>
</dbReference>
<dbReference type="InterPro" id="IPR036864">
    <property type="entry name" value="Zn2-C6_fun-type_DNA-bd_sf"/>
</dbReference>
<dbReference type="InterPro" id="IPR001138">
    <property type="entry name" value="Zn2Cys6_DnaBD"/>
</dbReference>
<dbReference type="PANTHER" id="PTHR47338:SF3">
    <property type="entry name" value="C6 FINGER DOMAIN TRANSCRIPTION FACTOR DBAA-RELATED"/>
    <property type="match status" value="1"/>
</dbReference>
<dbReference type="PANTHER" id="PTHR47338">
    <property type="entry name" value="ZN(II)2CYS6 TRANSCRIPTION FACTOR (EUROFUNG)-RELATED"/>
    <property type="match status" value="1"/>
</dbReference>
<dbReference type="Pfam" id="PF04082">
    <property type="entry name" value="Fungal_trans"/>
    <property type="match status" value="1"/>
</dbReference>
<dbReference type="Pfam" id="PF00172">
    <property type="entry name" value="Zn_clus"/>
    <property type="match status" value="1"/>
</dbReference>
<dbReference type="SMART" id="SM00066">
    <property type="entry name" value="GAL4"/>
    <property type="match status" value="1"/>
</dbReference>
<dbReference type="SUPFAM" id="SSF57701">
    <property type="entry name" value="Zn2/Cys6 DNA-binding domain"/>
    <property type="match status" value="1"/>
</dbReference>
<dbReference type="PROSITE" id="PS00463">
    <property type="entry name" value="ZN2_CY6_FUNGAL_1"/>
    <property type="match status" value="1"/>
</dbReference>
<dbReference type="PROSITE" id="PS50048">
    <property type="entry name" value="ZN2_CY6_FUNGAL_2"/>
    <property type="match status" value="1"/>
</dbReference>
<name>ABL7_LEPMJ</name>
<sequence>MDTTHDRRTSLSCDECRRRKLKCDRVRPQCGTCALSESECVFPGDSRKRGPKKGQLQALRARIRTLEQQLAAKDATWNMTYDFQDSTAAEPDEFSQCIQPNVNVFEPESMETLIFGIASSTSWPKNGMTPLDPALGAESHDSHISSTLSSLSLSALVQADLEQLFFDRVYQSAPIIHKARYITLMEQEDPLPACVCLRLAIRTSAAAFSARYHDIGERLYLETLQSLESLESNEHTLPWGAKNIQIEHIQSWLLLAVYEHMRMDKSQASSATSRALRLVQRCRLGDLDASDCLIQVGSHTTTATEEDFAVMEEKRRTFWLAFCFDRLLNTRDDLNWALPEEMVGFQHGHSLFSPGHFQGASLMYDLQIRMRVPASEASFQHSQDTNMPLLSEVMGEGNDDSLSPFATCVALMALYGCCATHRRLVSIAGGSGNESTKFWMRHNWLMSAIEKQRRLLQAPESTPNIFGDDPMLAFTHFFVPTLILHLVETADLWQWHSAEQEELRSVYKQQAYIAAKDRTRVAESLLCFSGFKVHPFLPTVLVRFFDFSGKRRIEMSDPDATSESRRNIRAMTKVLSLLRDIHRSAKEIPDDVLDGLETTLL</sequence>
<evidence type="ECO:0000255" key="1">
    <source>
        <dbReference type="PROSITE-ProRule" id="PRU00227"/>
    </source>
</evidence>
<evidence type="ECO:0000269" key="2">
    <source>
    </source>
</evidence>
<evidence type="ECO:0000303" key="3">
    <source>
    </source>
</evidence>
<evidence type="ECO:0000305" key="4"/>
<feature type="chain" id="PRO_0000448427" description="Abscisic acid cluster transcription factor abl7">
    <location>
        <begin position="1"/>
        <end position="601"/>
    </location>
</feature>
<feature type="DNA-binding region" description="Zn(2)-C6 fungal-type" evidence="1">
    <location>
        <begin position="13"/>
        <end position="40"/>
    </location>
</feature>
<proteinExistence type="evidence at transcript level"/>
<accession>E5A7E3</accession>
<organism>
    <name type="scientific">Leptosphaeria maculans (strain JN3 / isolate v23.1.3 / race Av1-4-5-6-7-8)</name>
    <name type="common">Blackleg fungus</name>
    <name type="synonym">Phoma lingam</name>
    <dbReference type="NCBI Taxonomy" id="985895"/>
    <lineage>
        <taxon>Eukaryota</taxon>
        <taxon>Fungi</taxon>
        <taxon>Dikarya</taxon>
        <taxon>Ascomycota</taxon>
        <taxon>Pezizomycotina</taxon>
        <taxon>Dothideomycetes</taxon>
        <taxon>Pleosporomycetidae</taxon>
        <taxon>Pleosporales</taxon>
        <taxon>Pleosporineae</taxon>
        <taxon>Leptosphaeriaceae</taxon>
        <taxon>Plenodomus</taxon>
        <taxon>Plenodomus lingam/Leptosphaeria maculans species complex</taxon>
    </lineage>
</organism>
<protein>
    <recommendedName>
        <fullName evidence="3">Abscisic acid cluster transcription factor abl7</fullName>
    </recommendedName>
    <alternativeName>
        <fullName evidence="3">Abscisic acid biosynthesis cluster protein 7</fullName>
    </alternativeName>
</protein>
<keyword id="KW-0238">DNA-binding</keyword>
<keyword id="KW-0479">Metal-binding</keyword>
<keyword id="KW-0539">Nucleus</keyword>
<keyword id="KW-1185">Reference proteome</keyword>
<keyword id="KW-0804">Transcription</keyword>
<keyword id="KW-0805">Transcription regulation</keyword>
<keyword id="KW-0843">Virulence</keyword>
<keyword id="KW-0862">Zinc</keyword>